<organism>
    <name type="scientific">Salinispora arenicola (strain CNS-205)</name>
    <dbReference type="NCBI Taxonomy" id="391037"/>
    <lineage>
        <taxon>Bacteria</taxon>
        <taxon>Bacillati</taxon>
        <taxon>Actinomycetota</taxon>
        <taxon>Actinomycetes</taxon>
        <taxon>Micromonosporales</taxon>
        <taxon>Micromonosporaceae</taxon>
        <taxon>Salinispora</taxon>
    </lineage>
</organism>
<comment type="function">
    <text evidence="1">Bifunctional enzyme with both catalase and broad-spectrum peroxidase activity.</text>
</comment>
<comment type="catalytic activity">
    <reaction evidence="1">
        <text>H2O2 + AH2 = A + 2 H2O</text>
        <dbReference type="Rhea" id="RHEA:30275"/>
        <dbReference type="ChEBI" id="CHEBI:13193"/>
        <dbReference type="ChEBI" id="CHEBI:15377"/>
        <dbReference type="ChEBI" id="CHEBI:16240"/>
        <dbReference type="ChEBI" id="CHEBI:17499"/>
        <dbReference type="EC" id="1.11.1.21"/>
    </reaction>
</comment>
<comment type="catalytic activity">
    <reaction evidence="1">
        <text>2 H2O2 = O2 + 2 H2O</text>
        <dbReference type="Rhea" id="RHEA:20309"/>
        <dbReference type="ChEBI" id="CHEBI:15377"/>
        <dbReference type="ChEBI" id="CHEBI:15379"/>
        <dbReference type="ChEBI" id="CHEBI:16240"/>
        <dbReference type="EC" id="1.11.1.21"/>
    </reaction>
</comment>
<comment type="cofactor">
    <cofactor evidence="1">
        <name>heme b</name>
        <dbReference type="ChEBI" id="CHEBI:60344"/>
    </cofactor>
    <text evidence="1">Binds 1 heme b (iron(II)-protoporphyrin IX) group per dimer.</text>
</comment>
<comment type="subunit">
    <text evidence="1">Homodimer or homotetramer.</text>
</comment>
<comment type="PTM">
    <text evidence="1">Formation of the three residue Trp-Tyr-Met cross-link is important for the catalase, but not the peroxidase activity of the enzyme.</text>
</comment>
<comment type="similarity">
    <text evidence="1">Belongs to the peroxidase family. Peroxidase/catalase subfamily.</text>
</comment>
<keyword id="KW-0349">Heme</keyword>
<keyword id="KW-0376">Hydrogen peroxide</keyword>
<keyword id="KW-0408">Iron</keyword>
<keyword id="KW-0479">Metal-binding</keyword>
<keyword id="KW-0560">Oxidoreductase</keyword>
<keyword id="KW-0575">Peroxidase</keyword>
<reference key="1">
    <citation type="submission" date="2007-10" db="EMBL/GenBank/DDBJ databases">
        <title>Complete sequence of Salinispora arenicola CNS-205.</title>
        <authorList>
            <consortium name="US DOE Joint Genome Institute"/>
            <person name="Copeland A."/>
            <person name="Lucas S."/>
            <person name="Lapidus A."/>
            <person name="Barry K."/>
            <person name="Glavina del Rio T."/>
            <person name="Dalin E."/>
            <person name="Tice H."/>
            <person name="Pitluck S."/>
            <person name="Foster B."/>
            <person name="Schmutz J."/>
            <person name="Larimer F."/>
            <person name="Land M."/>
            <person name="Hauser L."/>
            <person name="Kyrpides N."/>
            <person name="Ivanova N."/>
            <person name="Jensen P.R."/>
            <person name="Moore B.S."/>
            <person name="Penn K."/>
            <person name="Jenkins C."/>
            <person name="Udwary D."/>
            <person name="Xiang L."/>
            <person name="Gontang E."/>
            <person name="Richardson P."/>
        </authorList>
    </citation>
    <scope>NUCLEOTIDE SEQUENCE [LARGE SCALE GENOMIC DNA]</scope>
    <source>
        <strain>CNS-205</strain>
    </source>
</reference>
<dbReference type="EC" id="1.11.1.21" evidence="1"/>
<dbReference type="EMBL" id="CP000850">
    <property type="protein sequence ID" value="ABV98025.1"/>
    <property type="molecule type" value="Genomic_DNA"/>
</dbReference>
<dbReference type="SMR" id="A8M0L5"/>
<dbReference type="STRING" id="391037.Sare_2160"/>
<dbReference type="KEGG" id="saq:Sare_2160"/>
<dbReference type="PATRIC" id="fig|391037.6.peg.2185"/>
<dbReference type="eggNOG" id="COG0376">
    <property type="taxonomic scope" value="Bacteria"/>
</dbReference>
<dbReference type="HOGENOM" id="CLU_025424_2_0_11"/>
<dbReference type="OrthoDB" id="9759743at2"/>
<dbReference type="GO" id="GO:0005829">
    <property type="term" value="C:cytosol"/>
    <property type="evidence" value="ECO:0007669"/>
    <property type="project" value="TreeGrafter"/>
</dbReference>
<dbReference type="GO" id="GO:0004096">
    <property type="term" value="F:catalase activity"/>
    <property type="evidence" value="ECO:0007669"/>
    <property type="project" value="UniProtKB-UniRule"/>
</dbReference>
<dbReference type="GO" id="GO:0020037">
    <property type="term" value="F:heme binding"/>
    <property type="evidence" value="ECO:0007669"/>
    <property type="project" value="InterPro"/>
</dbReference>
<dbReference type="GO" id="GO:0046872">
    <property type="term" value="F:metal ion binding"/>
    <property type="evidence" value="ECO:0007669"/>
    <property type="project" value="UniProtKB-KW"/>
</dbReference>
<dbReference type="GO" id="GO:0070301">
    <property type="term" value="P:cellular response to hydrogen peroxide"/>
    <property type="evidence" value="ECO:0007669"/>
    <property type="project" value="TreeGrafter"/>
</dbReference>
<dbReference type="GO" id="GO:0042744">
    <property type="term" value="P:hydrogen peroxide catabolic process"/>
    <property type="evidence" value="ECO:0007669"/>
    <property type="project" value="UniProtKB-KW"/>
</dbReference>
<dbReference type="CDD" id="cd08200">
    <property type="entry name" value="catalase_peroxidase_2"/>
    <property type="match status" value="1"/>
</dbReference>
<dbReference type="FunFam" id="1.10.420.10:FF:000002">
    <property type="entry name" value="Catalase-peroxidase"/>
    <property type="match status" value="1"/>
</dbReference>
<dbReference type="FunFam" id="1.10.420.10:FF:000004">
    <property type="entry name" value="Catalase-peroxidase"/>
    <property type="match status" value="1"/>
</dbReference>
<dbReference type="FunFam" id="1.10.520.10:FF:000002">
    <property type="entry name" value="Catalase-peroxidase"/>
    <property type="match status" value="1"/>
</dbReference>
<dbReference type="Gene3D" id="1.10.520.10">
    <property type="match status" value="2"/>
</dbReference>
<dbReference type="Gene3D" id="1.10.420.10">
    <property type="entry name" value="Peroxidase, domain 2"/>
    <property type="match status" value="2"/>
</dbReference>
<dbReference type="HAMAP" id="MF_01961">
    <property type="entry name" value="Catal_peroxid"/>
    <property type="match status" value="1"/>
</dbReference>
<dbReference type="InterPro" id="IPR000763">
    <property type="entry name" value="Catalase_peroxidase"/>
</dbReference>
<dbReference type="InterPro" id="IPR002016">
    <property type="entry name" value="Haem_peroxidase"/>
</dbReference>
<dbReference type="InterPro" id="IPR010255">
    <property type="entry name" value="Haem_peroxidase_sf"/>
</dbReference>
<dbReference type="InterPro" id="IPR019794">
    <property type="entry name" value="Peroxidases_AS"/>
</dbReference>
<dbReference type="InterPro" id="IPR019793">
    <property type="entry name" value="Peroxidases_heam-ligand_BS"/>
</dbReference>
<dbReference type="NCBIfam" id="TIGR00198">
    <property type="entry name" value="cat_per_HPI"/>
    <property type="match status" value="1"/>
</dbReference>
<dbReference type="NCBIfam" id="NF011635">
    <property type="entry name" value="PRK15061.1"/>
    <property type="match status" value="1"/>
</dbReference>
<dbReference type="PANTHER" id="PTHR30555:SF0">
    <property type="entry name" value="CATALASE-PEROXIDASE"/>
    <property type="match status" value="1"/>
</dbReference>
<dbReference type="PANTHER" id="PTHR30555">
    <property type="entry name" value="HYDROPEROXIDASE I, BIFUNCTIONAL CATALASE-PEROXIDASE"/>
    <property type="match status" value="1"/>
</dbReference>
<dbReference type="Pfam" id="PF00141">
    <property type="entry name" value="peroxidase"/>
    <property type="match status" value="2"/>
</dbReference>
<dbReference type="PRINTS" id="PR00460">
    <property type="entry name" value="BPEROXIDASE"/>
</dbReference>
<dbReference type="PRINTS" id="PR00458">
    <property type="entry name" value="PEROXIDASE"/>
</dbReference>
<dbReference type="SUPFAM" id="SSF48113">
    <property type="entry name" value="Heme-dependent peroxidases"/>
    <property type="match status" value="2"/>
</dbReference>
<dbReference type="PROSITE" id="PS00435">
    <property type="entry name" value="PEROXIDASE_1"/>
    <property type="match status" value="1"/>
</dbReference>
<dbReference type="PROSITE" id="PS00436">
    <property type="entry name" value="PEROXIDASE_2"/>
    <property type="match status" value="1"/>
</dbReference>
<dbReference type="PROSITE" id="PS50873">
    <property type="entry name" value="PEROXIDASE_4"/>
    <property type="match status" value="1"/>
</dbReference>
<feature type="chain" id="PRO_0000354902" description="Catalase-peroxidase">
    <location>
        <begin position="1"/>
        <end position="758"/>
    </location>
</feature>
<feature type="region of interest" description="Disordered" evidence="2">
    <location>
        <begin position="1"/>
        <end position="59"/>
    </location>
</feature>
<feature type="compositionally biased region" description="Polar residues" evidence="2">
    <location>
        <begin position="1"/>
        <end position="10"/>
    </location>
</feature>
<feature type="active site" description="Proton acceptor" evidence="1">
    <location>
        <position position="129"/>
    </location>
</feature>
<feature type="binding site" description="axial binding residue" evidence="1">
    <location>
        <position position="291"/>
    </location>
    <ligand>
        <name>heme b</name>
        <dbReference type="ChEBI" id="CHEBI:60344"/>
    </ligand>
    <ligandPart>
        <name>Fe</name>
        <dbReference type="ChEBI" id="CHEBI:18248"/>
    </ligandPart>
</feature>
<feature type="site" description="Transition state stabilizer" evidence="1">
    <location>
        <position position="125"/>
    </location>
</feature>
<feature type="cross-link" description="Tryptophyl-tyrosyl-methioninium (Trp-Tyr) (with M-276)" evidence="1">
    <location>
        <begin position="128"/>
        <end position="250"/>
    </location>
</feature>
<feature type="cross-link" description="Tryptophyl-tyrosyl-methioninium (Tyr-Met) (with W-128)" evidence="1">
    <location>
        <begin position="250"/>
        <end position="276"/>
    </location>
</feature>
<accession>A8M0L5</accession>
<gene>
    <name evidence="1" type="primary">katG</name>
    <name type="ordered locus">Sare_2160</name>
</gene>
<sequence>MSDTQDNAPASAQGVDQKAAAGCPVAHDSVTAHGSESESPAIDSPTPHSGGRPRTNRDWWPNQLDLSVLSTNSAKVNPLGEDFAYAKEFAKLDVEALKRDIVEVLTTSQDWWPADFGHYGGLMIRLSWHAAGTYRIDDGRGGAGDGGQRFAPLNSWPDNVNLDKARRLLWPVKQKYGQKISWADLLVLAGNVALESMGFKTFGFGFGREDVWEPEEIFWGSEDTWVGDERYVSEKEFVAGVGATEMGLIYVNPEGPRGNADPAAAAHFIRETFRRMAMDDEETVALIAGGHTFGKTHGAGIADDHVGPEPEAAPLEAQGLGWMSSYASGAGADAISSGLEVTWTDRPTQWSNRFFEILFAYEWELTTSPGGAKQWVAKDAEAIIPDAYDAAKKHKPTMLTTDLSLRVDPAYERISRRFLENPDEFALAFAKAWYKLLHRDMGPVSRFLGPWVPEPQLWQDPVPAVDHALVGDADIAALKAKVLQSGLTTAQLVSTAWASAASFRHTDRRGGANGARVRLEPQRGWEVNQPEQLATVLTTLEGIQREFNAAGGTKISLADLIVLAGSAAVEKAARDAGFEVTVPFHPGRTDATQEQTDVESFQVLEPRADGFRNYLRPGEKAQPEVLLVDRAYMLNLTAPEMTVLIGGLRALEANVGGSRHGVLTDRPGVLTNDFFTNLLALGTRWKASESTEHVYEIRDLATDTVKWTASAVDLIFGSNSQLRALAEVYASEDAREKFVTDFVAAWTKVMELDRFDLA</sequence>
<evidence type="ECO:0000255" key="1">
    <source>
        <dbReference type="HAMAP-Rule" id="MF_01961"/>
    </source>
</evidence>
<evidence type="ECO:0000256" key="2">
    <source>
        <dbReference type="SAM" id="MobiDB-lite"/>
    </source>
</evidence>
<protein>
    <recommendedName>
        <fullName evidence="1">Catalase-peroxidase</fullName>
        <shortName evidence="1">CP</shortName>
        <ecNumber evidence="1">1.11.1.21</ecNumber>
    </recommendedName>
    <alternativeName>
        <fullName evidence="1">Peroxidase/catalase</fullName>
    </alternativeName>
</protein>
<proteinExistence type="inferred from homology"/>
<name>KATG_SALAI</name>